<gene>
    <name type="primary">GP</name>
</gene>
<proteinExistence type="inferred from homology"/>
<accession>Q66798</accession>
<feature type="signal peptide" evidence="5">
    <location>
        <begin position="1"/>
        <end position="32"/>
    </location>
</feature>
<feature type="chain" id="PRO_0000037479" description="Envelope glycoprotein">
    <location>
        <begin position="33"/>
        <end position="676"/>
    </location>
</feature>
<feature type="chain" id="PRO_0000037480" description="GP1" evidence="1">
    <location>
        <begin position="33"/>
        <end position="501"/>
    </location>
</feature>
<feature type="chain" id="PRO_0000037481" description="GP2" evidence="1">
    <location>
        <begin position="502"/>
        <end position="676"/>
    </location>
</feature>
<feature type="chain" id="PRO_0000245064" description="Shed GP" evidence="1">
    <location>
        <begin position="502"/>
        <end position="637"/>
    </location>
</feature>
<feature type="topological domain" description="Extracellular" evidence="5">
    <location>
        <begin position="33"/>
        <end position="650"/>
    </location>
</feature>
<feature type="transmembrane region" description="Helical" evidence="5">
    <location>
        <begin position="651"/>
        <end position="671"/>
    </location>
</feature>
<feature type="topological domain" description="Cytoplasmic" evidence="5">
    <location>
        <begin position="672"/>
        <end position="676"/>
    </location>
</feature>
<feature type="region of interest" description="Receptor-binding" evidence="1">
    <location>
        <begin position="54"/>
        <end position="201"/>
    </location>
</feature>
<feature type="region of interest" description="Mucin-like region" evidence="1">
    <location>
        <begin position="305"/>
        <end position="485"/>
    </location>
</feature>
<feature type="region of interest" description="Disordered" evidence="6">
    <location>
        <begin position="312"/>
        <end position="351"/>
    </location>
</feature>
<feature type="region of interest" description="Disordered" evidence="6">
    <location>
        <begin position="406"/>
        <end position="458"/>
    </location>
</feature>
<feature type="region of interest" description="Fusion peptide" evidence="1">
    <location>
        <begin position="524"/>
        <end position="539"/>
    </location>
</feature>
<feature type="coiled-coil region" evidence="5">
    <location>
        <begin position="554"/>
        <end position="595"/>
    </location>
</feature>
<feature type="coiled-coil region" evidence="5">
    <location>
        <begin position="615"/>
        <end position="634"/>
    </location>
</feature>
<feature type="compositionally biased region" description="Basic and acidic residues" evidence="6">
    <location>
        <begin position="330"/>
        <end position="344"/>
    </location>
</feature>
<feature type="compositionally biased region" description="Polar residues" evidence="6">
    <location>
        <begin position="415"/>
        <end position="430"/>
    </location>
</feature>
<feature type="compositionally biased region" description="Polar residues" evidence="6">
    <location>
        <begin position="448"/>
        <end position="458"/>
    </location>
</feature>
<feature type="site" description="Involved in receptor recognition and/or post-binding events" evidence="5">
    <location>
        <position position="57"/>
    </location>
</feature>
<feature type="site" description="Involved in receptor recognition and/or post-binding events" evidence="5">
    <location>
        <position position="63"/>
    </location>
</feature>
<feature type="site" description="Involved in receptor recognition and/or post-binding events" evidence="5">
    <location>
        <position position="88"/>
    </location>
</feature>
<feature type="site" description="Involved in receptor recognition and/or post-binding events" evidence="5">
    <location>
        <position position="170"/>
    </location>
</feature>
<feature type="site" description="Cleavage; by host furin" evidence="1">
    <location>
        <begin position="501"/>
        <end position="502"/>
    </location>
</feature>
<feature type="site" description="Cleavage; by host ADAM17" evidence="1">
    <location>
        <begin position="637"/>
        <end position="638"/>
    </location>
</feature>
<feature type="lipid moiety-binding region" description="S-palmitoyl cysteine; by host" evidence="3">
    <location>
        <position position="670"/>
    </location>
</feature>
<feature type="lipid moiety-binding region" description="S-palmitoyl cysteine; by host" evidence="3">
    <location>
        <position position="672"/>
    </location>
</feature>
<feature type="glycosylation site" description="N-linked (GlcNAc...) asparagine; by host" evidence="5">
    <location>
        <position position="40"/>
    </location>
</feature>
<feature type="glycosylation site" description="N-linked (GlcNAc...) asparagine; by host" evidence="5">
    <location>
        <position position="204"/>
    </location>
</feature>
<feature type="glycosylation site" description="N-linked (GlcNAc...) asparagine; by host" evidence="5">
    <location>
        <position position="208"/>
    </location>
</feature>
<feature type="glycosylation site" description="N-linked (GlcNAc...) asparagine; by host" evidence="5">
    <location>
        <position position="238"/>
    </location>
</feature>
<feature type="glycosylation site" description="N-linked (GlcNAc...) asparagine; by host" evidence="5">
    <location>
        <position position="257"/>
    </location>
</feature>
<feature type="glycosylation site" description="N-linked (GlcNAc...) asparagine; by host" evidence="5">
    <location>
        <position position="268"/>
    </location>
</feature>
<feature type="glycosylation site" description="N-linked (GlcNAc...) asparagine; by host" evidence="5">
    <location>
        <position position="296"/>
    </location>
</feature>
<feature type="glycosylation site" description="N-linked (GlcNAc...) asparagine; by host" evidence="5">
    <location>
        <position position="314"/>
    </location>
</feature>
<feature type="glycosylation site" description="N-linked (GlcNAc...) asparagine; by host" evidence="5">
    <location>
        <position position="366"/>
    </location>
</feature>
<feature type="glycosylation site" description="N-linked (GlcNAc...) asparagine; by host" evidence="5">
    <location>
        <position position="463"/>
    </location>
</feature>
<feature type="glycosylation site" description="N-linked (GlcNAc...) asparagine; by host" evidence="5">
    <location>
        <position position="563"/>
    </location>
</feature>
<feature type="glycosylation site" description="N-linked (GlcNAc...) asparagine; by host" evidence="5">
    <location>
        <position position="618"/>
    </location>
</feature>
<feature type="disulfide bond" description="Interchain (between GP1 and GP2 chains)" evidence="1">
    <location>
        <begin position="53"/>
        <end position="609"/>
    </location>
</feature>
<feature type="disulfide bond" evidence="5">
    <location>
        <begin position="108"/>
        <end position="135"/>
    </location>
</feature>
<feature type="disulfide bond" evidence="5">
    <location>
        <begin position="121"/>
        <end position="147"/>
    </location>
</feature>
<feature type="disulfide bond" evidence="5">
    <location>
        <begin position="511"/>
        <end position="556"/>
    </location>
</feature>
<feature type="disulfide bond" evidence="2">
    <location>
        <begin position="601"/>
        <end position="608"/>
    </location>
</feature>
<comment type="function">
    <molecule>Envelope glycoprotein</molecule>
    <text evidence="3">Trimeric GP1,2 complexes form the virion surface spikes and mediate the viral entry processes, with GP1 acting as the receptor-binding subunit and GP2 as the membrane fusion subunit. At later times of infection, down-regulates the expression of various host cell surface molecules that are essential for immune surveillance and cell adhesion. Down-modulates several integrins including ITGA1, ITGA2, ITGA3, ITGA4, ITGA5, ITGA6, ITGAV and ITGB1. This decrease in cell adhesion molecules may lead to cell detachment, contributing to the disruption of blood vessel integrity and hemorrhages developed during infection (cytotoxicity). Interacts with host TLR4 and thereby stimulates the differentiation and activation of monocytes leading to bystander death of T-lymphocytes. Down-regulates as well the function of host natural killer cells. Counteracts the antiviral effect of host BST2/tetherin that restricts release of progeny virions from infected cells. However, cooperates with VP40 and host BST2 to activate canonical NF-kappa-B pathway in a manner dependent on neddylation.</text>
</comment>
<comment type="function">
    <molecule>Shed GP</molecule>
    <text evidence="3">Functions as a decoy for anti-GP1,2 antibodies thereby contributing to viral immune evasion. Interacts and activates host macrophages and dendritic cells inducing up-regulation of cytokine transcription. This effect is mediated throught activation of host TLR4.</text>
</comment>
<comment type="function">
    <molecule>GP1</molecule>
    <text evidence="2 3 4">Responsible for binding to the receptor(s) on target cells. Interacts with CD209/DC-SIGN and CLEC4M/DC-SIGNR which act as cofactors for virus entry into dendritic cells (DCs) and endothelial cells (By similarity). Binding to the macrophage specific lectin CLEC10A also seems to enhance virus infectivity (By similarity). Interaction with FOLR1/folate receptor alpha may be a cofactor for virus entry in some cell types, although results are contradictory (By similarity). Members of the Tyro3 receptor tyrosine kinase family also seem to be cell entry factors in filovirus infection (By similarity). Once attached, the virions are internalized through clathrin-dependent endocytosis and/or macropinocytosis. After internalization of the virus into the endosomes of the host cell, proteolysis of GP1 by two cysteine proteases, CTSB/cathepsin B and CTSL/cathepsin L removes the glycan cap and allows GP1 binding to the host entry receptor NPC1. NPC1-binding, Ca(2+) and acidic pH induce a conformational change of GP2, which unmasks its fusion peptide and permit membranes fusion (By similarity).</text>
</comment>
<comment type="function">
    <molecule>GP2</molecule>
    <text evidence="3">Acts as a class I viral fusion protein. Under the current model, the protein has at least 3 conformational states: pre-fusion native state, pre-hairpin intermediate state, and post-fusion hairpin state. During viral and target cell membrane fusion, the coiled coil regions (heptad repeats) assume a trimer-of-hairpins structure, positioning the fusion peptide in close proximity to the C-terminal region of the ectodomain. The formation of this structure appears to drive apposition and subsequent fusion of viral and target cell membranes. Responsible for penetration of the virus into the cell cytoplasm by mediating the fusion of the membrane of the endocytosed virus particle with the endosomal membrane. Low pH in endosomes induces an irreversible conformational change in GP2, releasing the fusion hydrophobic peptide.</text>
</comment>
<comment type="subunit">
    <molecule>Envelope glycoprotein</molecule>
    <text evidence="3">Homotrimer; each monomer consists of a GP1 and a GP2 subunit linked by disulfide bonds. The resulting peplomers (GP1,2) protrude from the virus surface as spikes. Interacts with host integrin alpha-V/ITGAV. Interacts with host CLEC10A. Binds also to host CD209 and CLEC4M/DC-SIGN(R). Interacts with host FOLR1. Interacts with BST2; this interaction inhibits the antiviral effect of BST2 and this allows viral release from infected cells. Interacts with host FCN1; this interaction enhances viral entry. Interacts with host TLR4; this interaction induces cell death in T-lymphocytes or proinflammatory cytokines and SOCS1 production in monocytes.</text>
</comment>
<comment type="subunit">
    <molecule>GP1</molecule>
    <text evidence="3">Interacts with host entry receptor NPC1.</text>
</comment>
<comment type="subunit">
    <molecule>Shed GP</molecule>
    <text evidence="3">GP1 and GP2delta are part of GP1,2delta soluble complexes released by ectodomain shedding.</text>
</comment>
<comment type="subcellular location">
    <molecule>GP2</molecule>
    <subcellularLocation>
        <location evidence="3">Virion membrane</location>
        <topology evidence="5">Single-pass type I membrane protein</topology>
    </subcellularLocation>
    <subcellularLocation>
        <location evidence="3">Host cell membrane</location>
        <topology evidence="5">Single-pass type I membrane protein</topology>
    </subcellularLocation>
    <text evidence="3">In the cell, localizes to the plasma membrane lipid rafts, which probably represent the assembly and budding site.</text>
</comment>
<comment type="subcellular location">
    <molecule>GP1</molecule>
    <subcellularLocation>
        <location evidence="3">Virion membrane</location>
        <topology evidence="3">Peripheral membrane protein</topology>
    </subcellularLocation>
    <subcellularLocation>
        <location evidence="3">Host cell membrane</location>
        <topology evidence="3">Peripheral membrane protein</topology>
    </subcellularLocation>
    <text evidence="3">GP1 is not anchored to the viral envelope, but forms a disulfid-linked complex with the extravirion surface GP2. In the cell, both GP1 and GP2 localize to the plasma membrane lipid rafts, which probably represent the assembly and budding site. GP1 can also be shed after proteolytic processing.</text>
</comment>
<comment type="subcellular location">
    <molecule>Shed GP</molecule>
    <subcellularLocation>
        <location evidence="3">Secreted</location>
    </subcellularLocation>
    <text evidence="3">GP2-delta bound to GP1 (GP1,2-delta) is produced by proteolytic cleavage of GP1,2 by host ADAM17 and shed by the virus.</text>
</comment>
<comment type="domain">
    <text evidence="1">The mucin-like region seems to be involved in the cytotoxic function. This region is also involved in binding to human CLEC10A (By similarity).</text>
</comment>
<comment type="domain">
    <text evidence="1">The coiled coil regions play a role in oligomerization and fusion activity.</text>
</comment>
<comment type="PTM">
    <text evidence="1">The signal peptide region modulates GP's high mannose glycosylation, thereby determining the efficiency of the interactions with DC-SIGN(R).</text>
</comment>
<comment type="PTM">
    <text evidence="1">N-glycosylated.</text>
</comment>
<comment type="PTM">
    <text evidence="1">O-glycosylated in the mucin-like region.</text>
</comment>
<comment type="PTM">
    <text evidence="1">Palmitoylation of GP2 is not required for its function.</text>
</comment>
<comment type="PTM">
    <text evidence="1">Specific enzymatic cleavages in vivo yield mature proteins. The precursor is processed into GP1 and GP2 by host cell furin in the trans Golgi, and maybe by other host proteases, to yield the mature GP1 and GP2 proteins. The cleavage site corresponds to the furin optimal cleavage sequence [KR]-X-[KR]-R. This cleavage does not seem to be required for function. After the internalization of the virus into cell endosomes, GP1 C-terminus is removed by the endosomal proteases cathepsin B, cathepsin L, or both, leaving a 19-kDa N-terminal fragment which is further digested by cathepsin B. Proteolytic processing of GP1,2 by host ADAM17 can remove the transmembrane anchor of GP2 and leads to shedding of complexes consisting in GP1 and truncated GP2 (GP1,2delta) (By similarity).</text>
</comment>
<comment type="RNA editing">
    <location>
        <position position="295" evidence="7"/>
    </location>
    <text>Partially edited. RNA editing at this position consists of an insertion of one adenine nucleotide. The sequence displayed here is the full-length transmembrane glycoprotein, derived from the edited RNA. The unedited RNA gives rise to the small secreted glycoprotein (AC P60173).</text>
</comment>
<comment type="miscellaneous">
    <text evidence="1">Filoviruses entry requires functional lipid rafts at the host cell surface.</text>
</comment>
<comment type="miscellaneous">
    <text>Essential for infectivity, as it is the sole viral protein expressed at the virion surface.</text>
</comment>
<comment type="similarity">
    <text evidence="8">Belongs to the filoviruses glycoprotein family.</text>
</comment>
<reference key="1">
    <citation type="journal article" date="1996" name="Proc. Natl. Acad. Sci. U.S.A.">
        <title>The virion glycoproteins of Ebola viruses are encoded in two reading frames and are expressed through transcriptional editing.</title>
        <authorList>
            <person name="Sanchez A."/>
            <person name="Trappier S.G."/>
            <person name="Mahy B.W.J."/>
            <person name="Peters C.J."/>
            <person name="Nichol S.T."/>
        </authorList>
    </citation>
    <scope>NUCLEOTIDE SEQUENCE [GENOMIC RNA]</scope>
    <scope>RNA EDITING</scope>
</reference>
<dbReference type="EMBL" id="U23069">
    <property type="protein sequence ID" value="AAC54882.1"/>
    <property type="molecule type" value="Genomic_RNA"/>
</dbReference>
<dbReference type="SMR" id="Q66798"/>
<dbReference type="GlyCosmos" id="Q66798">
    <property type="glycosylation" value="12 sites, No reported glycans"/>
</dbReference>
<dbReference type="GO" id="GO:0005576">
    <property type="term" value="C:extracellular region"/>
    <property type="evidence" value="ECO:0007669"/>
    <property type="project" value="UniProtKB-SubCell"/>
</dbReference>
<dbReference type="GO" id="GO:0020002">
    <property type="term" value="C:host cell plasma membrane"/>
    <property type="evidence" value="ECO:0007669"/>
    <property type="project" value="UniProtKB-SubCell"/>
</dbReference>
<dbReference type="GO" id="GO:0016020">
    <property type="term" value="C:membrane"/>
    <property type="evidence" value="ECO:0007669"/>
    <property type="project" value="UniProtKB-KW"/>
</dbReference>
<dbReference type="GO" id="GO:0019031">
    <property type="term" value="C:viral envelope"/>
    <property type="evidence" value="ECO:0007669"/>
    <property type="project" value="UniProtKB-KW"/>
</dbReference>
<dbReference type="GO" id="GO:0055036">
    <property type="term" value="C:virion membrane"/>
    <property type="evidence" value="ECO:0007669"/>
    <property type="project" value="UniProtKB-SubCell"/>
</dbReference>
<dbReference type="GO" id="GO:0075512">
    <property type="term" value="P:clathrin-dependent endocytosis of virus by host cell"/>
    <property type="evidence" value="ECO:0007669"/>
    <property type="project" value="UniProtKB-KW"/>
</dbReference>
<dbReference type="GO" id="GO:0098670">
    <property type="term" value="P:entry receptor-mediated virion attachment to host cell"/>
    <property type="evidence" value="ECO:0007669"/>
    <property type="project" value="UniProtKB-KW"/>
</dbReference>
<dbReference type="GO" id="GO:0039654">
    <property type="term" value="P:fusion of virus membrane with host endosome membrane"/>
    <property type="evidence" value="ECO:0007669"/>
    <property type="project" value="UniProtKB-KW"/>
</dbReference>
<dbReference type="GO" id="GO:0052170">
    <property type="term" value="P:symbiont-mediated suppression of host innate immune response"/>
    <property type="evidence" value="ECO:0007669"/>
    <property type="project" value="UniProtKB-KW"/>
</dbReference>
<dbReference type="GO" id="GO:0039587">
    <property type="term" value="P:symbiont-mediated-mediated suppression of host tetherin activity"/>
    <property type="evidence" value="ECO:0007669"/>
    <property type="project" value="UniProtKB-KW"/>
</dbReference>
<dbReference type="CDD" id="cd09850">
    <property type="entry name" value="Ebola-like_HR1-HR2"/>
    <property type="match status" value="1"/>
</dbReference>
<dbReference type="Gene3D" id="1.10.287.210">
    <property type="match status" value="1"/>
</dbReference>
<dbReference type="InterPro" id="IPR054584">
    <property type="entry name" value="Ebola-like_HR1-HR2"/>
</dbReference>
<dbReference type="InterPro" id="IPR014625">
    <property type="entry name" value="GPC_FiloV"/>
</dbReference>
<dbReference type="InterPro" id="IPR002561">
    <property type="entry name" value="GPC_filovir-type_extra_dom"/>
</dbReference>
<dbReference type="Pfam" id="PF22307">
    <property type="entry name" value="Ebola-like_HR1-HR2"/>
    <property type="match status" value="1"/>
</dbReference>
<dbReference type="Pfam" id="PF01611">
    <property type="entry name" value="Filo_glycop"/>
    <property type="match status" value="1"/>
</dbReference>
<dbReference type="PIRSF" id="PIRSF036874">
    <property type="entry name" value="GPC_FiloV"/>
    <property type="match status" value="1"/>
</dbReference>
<dbReference type="SUPFAM" id="SSF58069">
    <property type="entry name" value="Virus ectodomain"/>
    <property type="match status" value="1"/>
</dbReference>
<keyword id="KW-1165">Clathrin-mediated endocytosis of virus by host</keyword>
<keyword id="KW-0165">Cleavage on pair of basic residues</keyword>
<keyword id="KW-0175">Coiled coil</keyword>
<keyword id="KW-1015">Disulfide bond</keyword>
<keyword id="KW-1170">Fusion of virus membrane with host endosomal membrane</keyword>
<keyword id="KW-1168">Fusion of virus membrane with host membrane</keyword>
<keyword id="KW-0325">Glycoprotein</keyword>
<keyword id="KW-1032">Host cell membrane</keyword>
<keyword id="KW-1043">Host membrane</keyword>
<keyword id="KW-0945">Host-virus interaction</keyword>
<keyword id="KW-1090">Inhibition of host innate immune response by virus</keyword>
<keyword id="KW-1084">Inhibition of host tetherin by virus</keyword>
<keyword id="KW-0449">Lipoprotein</keyword>
<keyword id="KW-0472">Membrane</keyword>
<keyword id="KW-0564">Palmitate</keyword>
<keyword id="KW-0691">RNA editing</keyword>
<keyword id="KW-0964">Secreted</keyword>
<keyword id="KW-0732">Signal</keyword>
<keyword id="KW-0812">Transmembrane</keyword>
<keyword id="KW-1133">Transmembrane helix</keyword>
<keyword id="KW-1161">Viral attachment to host cell</keyword>
<keyword id="KW-1234">Viral attachment to host entry receptor</keyword>
<keyword id="KW-0261">Viral envelope protein</keyword>
<keyword id="KW-0899">Viral immunoevasion</keyword>
<keyword id="KW-1162">Viral penetration into host cytoplasm</keyword>
<keyword id="KW-0946">Virion</keyword>
<keyword id="KW-1164">Virus endocytosis by host</keyword>
<keyword id="KW-1160">Virus entry into host cell</keyword>
<evidence type="ECO:0000250" key="1"/>
<evidence type="ECO:0000250" key="2">
    <source>
        <dbReference type="UniProtKB" id="O11457"/>
    </source>
</evidence>
<evidence type="ECO:0000250" key="3">
    <source>
        <dbReference type="UniProtKB" id="Q05320"/>
    </source>
</evidence>
<evidence type="ECO:0000250" key="4">
    <source>
        <dbReference type="UniProtKB" id="Q66814"/>
    </source>
</evidence>
<evidence type="ECO:0000255" key="5"/>
<evidence type="ECO:0000256" key="6">
    <source>
        <dbReference type="SAM" id="MobiDB-lite"/>
    </source>
</evidence>
<evidence type="ECO:0000269" key="7">
    <source>
    </source>
</evidence>
<evidence type="ECO:0000305" key="8"/>
<name>VGP_EBOSM</name>
<sequence length="676" mass="74971">MEGLSLLQLPRDKFRKSSFFVWVIILFQKAFSMPLGVVTNSTLEVTEIDQLVCKDHLASTDQLKSVGLNLEGSGVSTDIPSATKRWGFRSGVPPQVVSYEAGEWAENCYNLEIKKPDGSECLPPPPDGVRGFPRCRYVHKAQGTGPCPGDYAFHKDGAFFLYDRLASTVIYRGVNFAEGVIAFLILAKPKETFLQSPPIREAANYTENTSSYYATSYLEYEIENFGAQHSTTLFKINNNTFVLLDRPHTPQFLFQLNDTIQLHQQLSNTTGKLIWTLDANINADIGEWAFWENKKNLSEQLRGEELSFETLSLNETEDDDATSSRTTKGRISDRATRKYSDLVPKDSPGMVSLHVPEGETTLPSQNSTEGRRVDVNTQETITETTATIIGTNGNNMQISTIGTGLSSSQILSSSPTMAPSPETQTSTTYTPKLPVMTTEEPTTPPRNSPGSTTEAPTLTTPENITTAVKTVWAQESTSNGLITSTVTGILGSLGLRKRSRRQVNTRATGKCNPNLHYWTAQEQHNAAGIAWIPYFGPGAEGIYTEGLMHNQNALVCGLRQLANETTQALQLFLRATTELRTYTILNRKAIDFLLRRWGGTCRILGPDCCIEPHDWTKNITDKINQIIHDFIDNPLPNQDNDDNWWTGWRQWIPAGIGITGIIIAIIALLCVCKLLC</sequence>
<organism>
    <name type="scientific">Sudan ebolavirus (strain Maleo-79)</name>
    <name type="common">SEBOV</name>
    <name type="synonym">Sudan Ebola virus</name>
    <dbReference type="NCBI Taxonomy" id="128949"/>
    <lineage>
        <taxon>Viruses</taxon>
        <taxon>Riboviria</taxon>
        <taxon>Orthornavirae</taxon>
        <taxon>Negarnaviricota</taxon>
        <taxon>Haploviricotina</taxon>
        <taxon>Monjiviricetes</taxon>
        <taxon>Mononegavirales</taxon>
        <taxon>Filoviridae</taxon>
        <taxon>Orthoebolavirus</taxon>
        <taxon>Orthoebolavirus sudanense</taxon>
        <taxon>Sudan ebolavirus</taxon>
    </lineage>
</organism>
<organismHost>
    <name type="scientific">Epomops franqueti</name>
    <name type="common">Franquet's epauletted fruit bat</name>
    <name type="synonym">Epomophorus franqueti</name>
    <dbReference type="NCBI Taxonomy" id="77231"/>
</organismHost>
<organismHost>
    <name type="scientific">Homo sapiens</name>
    <name type="common">Human</name>
    <dbReference type="NCBI Taxonomy" id="9606"/>
</organismHost>
<organismHost>
    <name type="scientific">Myonycteris torquata</name>
    <name type="common">Little collared fruit bat</name>
    <dbReference type="NCBI Taxonomy" id="77243"/>
</organismHost>
<protein>
    <recommendedName>
        <fullName>Envelope glycoprotein</fullName>
    </recommendedName>
    <alternativeName>
        <fullName>GP1,2</fullName>
        <shortName>GP</shortName>
    </alternativeName>
    <component>
        <recommendedName>
            <fullName>GP1</fullName>
        </recommendedName>
    </component>
    <component>
        <recommendedName>
            <fullName>GP2</fullName>
        </recommendedName>
    </component>
    <component>
        <recommendedName>
            <fullName>Shed GP</fullName>
        </recommendedName>
        <alternativeName>
            <fullName>GP1,2-delta</fullName>
        </alternativeName>
    </component>
</protein>